<accession>A0K3L0</accession>
<dbReference type="EC" id="3.6.5.3" evidence="2"/>
<dbReference type="EMBL" id="CP000458">
    <property type="protein sequence ID" value="ABK07087.1"/>
    <property type="molecule type" value="Genomic_DNA"/>
</dbReference>
<dbReference type="EMBL" id="CP000458">
    <property type="protein sequence ID" value="ABK07100.1"/>
    <property type="molecule type" value="Genomic_DNA"/>
</dbReference>
<dbReference type="SMR" id="A0K3L0"/>
<dbReference type="KEGG" id="bch:Bcen2424_0333"/>
<dbReference type="KEGG" id="bch:Bcen2424_0346"/>
<dbReference type="HOGENOM" id="CLU_007265_0_0_4"/>
<dbReference type="GO" id="GO:0005829">
    <property type="term" value="C:cytosol"/>
    <property type="evidence" value="ECO:0007669"/>
    <property type="project" value="TreeGrafter"/>
</dbReference>
<dbReference type="GO" id="GO:0005525">
    <property type="term" value="F:GTP binding"/>
    <property type="evidence" value="ECO:0007669"/>
    <property type="project" value="UniProtKB-UniRule"/>
</dbReference>
<dbReference type="GO" id="GO:0003924">
    <property type="term" value="F:GTPase activity"/>
    <property type="evidence" value="ECO:0007669"/>
    <property type="project" value="InterPro"/>
</dbReference>
<dbReference type="GO" id="GO:0097216">
    <property type="term" value="F:guanosine tetraphosphate binding"/>
    <property type="evidence" value="ECO:0007669"/>
    <property type="project" value="UniProtKB-ARBA"/>
</dbReference>
<dbReference type="GO" id="GO:0003746">
    <property type="term" value="F:translation elongation factor activity"/>
    <property type="evidence" value="ECO:0007669"/>
    <property type="project" value="UniProtKB-UniRule"/>
</dbReference>
<dbReference type="CDD" id="cd01884">
    <property type="entry name" value="EF_Tu"/>
    <property type="match status" value="1"/>
</dbReference>
<dbReference type="CDD" id="cd03697">
    <property type="entry name" value="EFTU_II"/>
    <property type="match status" value="1"/>
</dbReference>
<dbReference type="CDD" id="cd03707">
    <property type="entry name" value="EFTU_III"/>
    <property type="match status" value="1"/>
</dbReference>
<dbReference type="FunFam" id="2.40.30.10:FF:000001">
    <property type="entry name" value="Elongation factor Tu"/>
    <property type="match status" value="1"/>
</dbReference>
<dbReference type="FunFam" id="3.40.50.300:FF:000003">
    <property type="entry name" value="Elongation factor Tu"/>
    <property type="match status" value="1"/>
</dbReference>
<dbReference type="Gene3D" id="3.40.50.300">
    <property type="entry name" value="P-loop containing nucleotide triphosphate hydrolases"/>
    <property type="match status" value="1"/>
</dbReference>
<dbReference type="Gene3D" id="2.40.30.10">
    <property type="entry name" value="Translation factors"/>
    <property type="match status" value="2"/>
</dbReference>
<dbReference type="HAMAP" id="MF_00118_B">
    <property type="entry name" value="EF_Tu_B"/>
    <property type="match status" value="1"/>
</dbReference>
<dbReference type="InterPro" id="IPR041709">
    <property type="entry name" value="EF-Tu_GTP-bd"/>
</dbReference>
<dbReference type="InterPro" id="IPR050055">
    <property type="entry name" value="EF-Tu_GTPase"/>
</dbReference>
<dbReference type="InterPro" id="IPR004161">
    <property type="entry name" value="EFTu-like_2"/>
</dbReference>
<dbReference type="InterPro" id="IPR033720">
    <property type="entry name" value="EFTU_2"/>
</dbReference>
<dbReference type="InterPro" id="IPR031157">
    <property type="entry name" value="G_TR_CS"/>
</dbReference>
<dbReference type="InterPro" id="IPR027417">
    <property type="entry name" value="P-loop_NTPase"/>
</dbReference>
<dbReference type="InterPro" id="IPR005225">
    <property type="entry name" value="Small_GTP-bd"/>
</dbReference>
<dbReference type="InterPro" id="IPR000795">
    <property type="entry name" value="T_Tr_GTP-bd_dom"/>
</dbReference>
<dbReference type="InterPro" id="IPR009000">
    <property type="entry name" value="Transl_B-barrel_sf"/>
</dbReference>
<dbReference type="InterPro" id="IPR009001">
    <property type="entry name" value="Transl_elong_EF1A/Init_IF2_C"/>
</dbReference>
<dbReference type="InterPro" id="IPR004541">
    <property type="entry name" value="Transl_elong_EFTu/EF1A_bac/org"/>
</dbReference>
<dbReference type="InterPro" id="IPR004160">
    <property type="entry name" value="Transl_elong_EFTu/EF1A_C"/>
</dbReference>
<dbReference type="NCBIfam" id="TIGR00485">
    <property type="entry name" value="EF-Tu"/>
    <property type="match status" value="1"/>
</dbReference>
<dbReference type="NCBIfam" id="NF000766">
    <property type="entry name" value="PRK00049.1"/>
    <property type="match status" value="1"/>
</dbReference>
<dbReference type="NCBIfam" id="NF009372">
    <property type="entry name" value="PRK12735.1"/>
    <property type="match status" value="1"/>
</dbReference>
<dbReference type="NCBIfam" id="NF009373">
    <property type="entry name" value="PRK12736.1"/>
    <property type="match status" value="1"/>
</dbReference>
<dbReference type="NCBIfam" id="TIGR00231">
    <property type="entry name" value="small_GTP"/>
    <property type="match status" value="1"/>
</dbReference>
<dbReference type="PANTHER" id="PTHR43721:SF22">
    <property type="entry name" value="ELONGATION FACTOR TU, MITOCHONDRIAL"/>
    <property type="match status" value="1"/>
</dbReference>
<dbReference type="PANTHER" id="PTHR43721">
    <property type="entry name" value="ELONGATION FACTOR TU-RELATED"/>
    <property type="match status" value="1"/>
</dbReference>
<dbReference type="Pfam" id="PF00009">
    <property type="entry name" value="GTP_EFTU"/>
    <property type="match status" value="1"/>
</dbReference>
<dbReference type="Pfam" id="PF03144">
    <property type="entry name" value="GTP_EFTU_D2"/>
    <property type="match status" value="1"/>
</dbReference>
<dbReference type="Pfam" id="PF03143">
    <property type="entry name" value="GTP_EFTU_D3"/>
    <property type="match status" value="1"/>
</dbReference>
<dbReference type="PRINTS" id="PR00315">
    <property type="entry name" value="ELONGATNFCT"/>
</dbReference>
<dbReference type="SUPFAM" id="SSF50465">
    <property type="entry name" value="EF-Tu/eEF-1alpha/eIF2-gamma C-terminal domain"/>
    <property type="match status" value="1"/>
</dbReference>
<dbReference type="SUPFAM" id="SSF52540">
    <property type="entry name" value="P-loop containing nucleoside triphosphate hydrolases"/>
    <property type="match status" value="1"/>
</dbReference>
<dbReference type="SUPFAM" id="SSF50447">
    <property type="entry name" value="Translation proteins"/>
    <property type="match status" value="1"/>
</dbReference>
<dbReference type="PROSITE" id="PS00301">
    <property type="entry name" value="G_TR_1"/>
    <property type="match status" value="1"/>
</dbReference>
<dbReference type="PROSITE" id="PS51722">
    <property type="entry name" value="G_TR_2"/>
    <property type="match status" value="1"/>
</dbReference>
<evidence type="ECO:0000250" key="1"/>
<evidence type="ECO:0000255" key="2">
    <source>
        <dbReference type="HAMAP-Rule" id="MF_00118"/>
    </source>
</evidence>
<organism>
    <name type="scientific">Burkholderia cenocepacia (strain HI2424)</name>
    <dbReference type="NCBI Taxonomy" id="331272"/>
    <lineage>
        <taxon>Bacteria</taxon>
        <taxon>Pseudomonadati</taxon>
        <taxon>Pseudomonadota</taxon>
        <taxon>Betaproteobacteria</taxon>
        <taxon>Burkholderiales</taxon>
        <taxon>Burkholderiaceae</taxon>
        <taxon>Burkholderia</taxon>
        <taxon>Burkholderia cepacia complex</taxon>
    </lineage>
</organism>
<protein>
    <recommendedName>
        <fullName evidence="2">Elongation factor Tu</fullName>
        <shortName evidence="2">EF-Tu</shortName>
        <ecNumber evidence="2">3.6.5.3</ecNumber>
    </recommendedName>
</protein>
<comment type="function">
    <text evidence="2">GTP hydrolase that promotes the GTP-dependent binding of aminoacyl-tRNA to the A-site of ribosomes during protein biosynthesis.</text>
</comment>
<comment type="catalytic activity">
    <reaction evidence="2">
        <text>GTP + H2O = GDP + phosphate + H(+)</text>
        <dbReference type="Rhea" id="RHEA:19669"/>
        <dbReference type="ChEBI" id="CHEBI:15377"/>
        <dbReference type="ChEBI" id="CHEBI:15378"/>
        <dbReference type="ChEBI" id="CHEBI:37565"/>
        <dbReference type="ChEBI" id="CHEBI:43474"/>
        <dbReference type="ChEBI" id="CHEBI:58189"/>
        <dbReference type="EC" id="3.6.5.3"/>
    </reaction>
    <physiologicalReaction direction="left-to-right" evidence="2">
        <dbReference type="Rhea" id="RHEA:19670"/>
    </physiologicalReaction>
</comment>
<comment type="subunit">
    <text evidence="2">Monomer.</text>
</comment>
<comment type="subcellular location">
    <subcellularLocation>
        <location evidence="2">Cytoplasm</location>
    </subcellularLocation>
</comment>
<comment type="similarity">
    <text evidence="2">Belongs to the TRAFAC class translation factor GTPase superfamily. Classic translation factor GTPase family. EF-Tu/EF-1A subfamily.</text>
</comment>
<gene>
    <name evidence="2" type="primary">tuf1</name>
    <name type="ordered locus">Bcen2424_0333</name>
</gene>
<gene>
    <name evidence="2" type="primary">tuf2</name>
    <name type="ordered locus">Bcen2424_0346</name>
</gene>
<sequence length="396" mass="42934">MAKGKFERTKPHVNVGTIGHVDHGKTTLTAAITTVLTKKFGGEAKAYDQIDAAPEEKARGITINTAHVEYETANRHYAHVDCPGHADYVKNMITGAAQMDGAILVCSAADGPMPQTREHILLARQVGVPYIIVFLNKCDMVDDAELLELVEMEVRELLSKYDFPGDDTPIVKGSAKLALEGDTGELGEVAIMSLADALDTYIPTPERAVDGAFLMPVEDVFSISGRGTVVTGRVERGIVKVGEEIEIVGIKPTVKTTCTGVEMFRKLLDQGQAGDNVGILLRGTKREDVERGQVLAKPGSITPHTHFTAEVYVLSKDEGGRHTPFFNNYRPQFYFRTTDVTGSIELPKDKEMVMPGDNVSITVKLIAPIAMEEGLRFAIREGGRTVGAGVVAKIIE</sequence>
<keyword id="KW-0963">Cytoplasm</keyword>
<keyword id="KW-0251">Elongation factor</keyword>
<keyword id="KW-0342">GTP-binding</keyword>
<keyword id="KW-0378">Hydrolase</keyword>
<keyword id="KW-0460">Magnesium</keyword>
<keyword id="KW-0479">Metal-binding</keyword>
<keyword id="KW-0547">Nucleotide-binding</keyword>
<keyword id="KW-0648">Protein biosynthesis</keyword>
<proteinExistence type="inferred from homology"/>
<reference key="1">
    <citation type="submission" date="2006-08" db="EMBL/GenBank/DDBJ databases">
        <title>Complete sequence of chromosome 1 of Burkholderia cenocepacia HI2424.</title>
        <authorList>
            <person name="Copeland A."/>
            <person name="Lucas S."/>
            <person name="Lapidus A."/>
            <person name="Barry K."/>
            <person name="Detter J.C."/>
            <person name="Glavina del Rio T."/>
            <person name="Hammon N."/>
            <person name="Israni S."/>
            <person name="Pitluck S."/>
            <person name="Chain P."/>
            <person name="Malfatti S."/>
            <person name="Shin M."/>
            <person name="Vergez L."/>
            <person name="Schmutz J."/>
            <person name="Larimer F."/>
            <person name="Land M."/>
            <person name="Hauser L."/>
            <person name="Kyrpides N."/>
            <person name="Kim E."/>
            <person name="LiPuma J.J."/>
            <person name="Gonzalez C.F."/>
            <person name="Konstantinidis K."/>
            <person name="Tiedje J.M."/>
            <person name="Richardson P."/>
        </authorList>
    </citation>
    <scope>NUCLEOTIDE SEQUENCE [LARGE SCALE GENOMIC DNA]</scope>
    <source>
        <strain>HI2424</strain>
    </source>
</reference>
<feature type="chain" id="PRO_0000337336" description="Elongation factor Tu">
    <location>
        <begin position="1"/>
        <end position="396"/>
    </location>
</feature>
<feature type="domain" description="tr-type G">
    <location>
        <begin position="10"/>
        <end position="206"/>
    </location>
</feature>
<feature type="region of interest" description="G1" evidence="1">
    <location>
        <begin position="19"/>
        <end position="26"/>
    </location>
</feature>
<feature type="region of interest" description="G2" evidence="1">
    <location>
        <begin position="60"/>
        <end position="64"/>
    </location>
</feature>
<feature type="region of interest" description="G3" evidence="1">
    <location>
        <begin position="81"/>
        <end position="84"/>
    </location>
</feature>
<feature type="region of interest" description="G4" evidence="1">
    <location>
        <begin position="136"/>
        <end position="139"/>
    </location>
</feature>
<feature type="region of interest" description="G5" evidence="1">
    <location>
        <begin position="174"/>
        <end position="176"/>
    </location>
</feature>
<feature type="binding site" evidence="2">
    <location>
        <begin position="19"/>
        <end position="26"/>
    </location>
    <ligand>
        <name>GTP</name>
        <dbReference type="ChEBI" id="CHEBI:37565"/>
    </ligand>
</feature>
<feature type="binding site" evidence="2">
    <location>
        <position position="26"/>
    </location>
    <ligand>
        <name>Mg(2+)</name>
        <dbReference type="ChEBI" id="CHEBI:18420"/>
    </ligand>
</feature>
<feature type="binding site" evidence="2">
    <location>
        <begin position="81"/>
        <end position="85"/>
    </location>
    <ligand>
        <name>GTP</name>
        <dbReference type="ChEBI" id="CHEBI:37565"/>
    </ligand>
</feature>
<feature type="binding site" evidence="2">
    <location>
        <begin position="136"/>
        <end position="139"/>
    </location>
    <ligand>
        <name>GTP</name>
        <dbReference type="ChEBI" id="CHEBI:37565"/>
    </ligand>
</feature>
<name>EFTU_BURCH</name>